<protein>
    <recommendedName>
        <fullName evidence="1">Glycerol-3-phosphate dehydrogenase [NAD(P)+]</fullName>
        <ecNumber evidence="1">1.1.1.94</ecNumber>
    </recommendedName>
    <alternativeName>
        <fullName evidence="1">NAD(P)(+)-dependent glycerol-3-phosphate dehydrogenase</fullName>
    </alternativeName>
    <alternativeName>
        <fullName evidence="1">NAD(P)H-dependent dihydroxyacetone-phosphate reductase</fullName>
    </alternativeName>
</protein>
<reference key="1">
    <citation type="submission" date="2008-06" db="EMBL/GenBank/DDBJ databases">
        <title>Genome and proteome analysis of A. pleuropneumoniae serotype 7.</title>
        <authorList>
            <person name="Linke B."/>
            <person name="Buettner F."/>
            <person name="Martinez-Arias R."/>
            <person name="Goesmann A."/>
            <person name="Baltes N."/>
            <person name="Tegetmeyer H."/>
            <person name="Singh M."/>
            <person name="Gerlach G.F."/>
        </authorList>
    </citation>
    <scope>NUCLEOTIDE SEQUENCE [LARGE SCALE GENOMIC DNA]</scope>
    <source>
        <strain>AP76</strain>
    </source>
</reference>
<gene>
    <name evidence="1" type="primary">gpsA</name>
    <name type="ordered locus">APP7_1570</name>
</gene>
<sequence length="336" mass="36052">MSEMYSAPVTVLGAGSYGTALAIALARNGHKTYLWGHQPEKMAVLATERMNNAFLPDIAFPDALEIESDLVQAIAKAKDILIVVPSHVFADVLKQIKPLLSAHHRIMWATKGLERNTGRLLQTVAQEILGNQYPLAVLSGPTFAKELAQGLPTAIALSSTDSQFADEMQQRIHCAKAFRVYLNNDMIGVQLGGAIKNVIAIGAGISDGMGFGANARTALITRGLAEISRLGASLGANANTFMGMAGLGDLVLTCTDNQSRNRRFGLMLGQGKSAEEAMAEIGQVVEGFYNTKEAYLLAQTQGVEMPIVEQIYQMLFCGKNAHDVATSLLGRERKGE</sequence>
<keyword id="KW-0963">Cytoplasm</keyword>
<keyword id="KW-0444">Lipid biosynthesis</keyword>
<keyword id="KW-0443">Lipid metabolism</keyword>
<keyword id="KW-0520">NAD</keyword>
<keyword id="KW-0521">NADP</keyword>
<keyword id="KW-0547">Nucleotide-binding</keyword>
<keyword id="KW-0560">Oxidoreductase</keyword>
<keyword id="KW-0594">Phospholipid biosynthesis</keyword>
<keyword id="KW-1208">Phospholipid metabolism</keyword>
<proteinExistence type="inferred from homology"/>
<feature type="chain" id="PRO_1000123113" description="Glycerol-3-phosphate dehydrogenase [NAD(P)+]">
    <location>
        <begin position="1"/>
        <end position="336"/>
    </location>
</feature>
<feature type="active site" description="Proton acceptor" evidence="1">
    <location>
        <position position="196"/>
    </location>
</feature>
<feature type="binding site" evidence="1">
    <location>
        <position position="16"/>
    </location>
    <ligand>
        <name>NADPH</name>
        <dbReference type="ChEBI" id="CHEBI:57783"/>
    </ligand>
</feature>
<feature type="binding site" evidence="1">
    <location>
        <position position="17"/>
    </location>
    <ligand>
        <name>NADPH</name>
        <dbReference type="ChEBI" id="CHEBI:57783"/>
    </ligand>
</feature>
<feature type="binding site" evidence="1">
    <location>
        <position position="37"/>
    </location>
    <ligand>
        <name>NADPH</name>
        <dbReference type="ChEBI" id="CHEBI:57783"/>
    </ligand>
</feature>
<feature type="binding site" evidence="1">
    <location>
        <position position="111"/>
    </location>
    <ligand>
        <name>NADPH</name>
        <dbReference type="ChEBI" id="CHEBI:57783"/>
    </ligand>
</feature>
<feature type="binding site" evidence="1">
    <location>
        <position position="111"/>
    </location>
    <ligand>
        <name>sn-glycerol 3-phosphate</name>
        <dbReference type="ChEBI" id="CHEBI:57597"/>
    </ligand>
</feature>
<feature type="binding site" evidence="1">
    <location>
        <position position="140"/>
    </location>
    <ligand>
        <name>sn-glycerol 3-phosphate</name>
        <dbReference type="ChEBI" id="CHEBI:57597"/>
    </ligand>
</feature>
<feature type="binding site" evidence="1">
    <location>
        <position position="142"/>
    </location>
    <ligand>
        <name>sn-glycerol 3-phosphate</name>
        <dbReference type="ChEBI" id="CHEBI:57597"/>
    </ligand>
</feature>
<feature type="binding site" evidence="1">
    <location>
        <position position="144"/>
    </location>
    <ligand>
        <name>NADPH</name>
        <dbReference type="ChEBI" id="CHEBI:57783"/>
    </ligand>
</feature>
<feature type="binding site" evidence="1">
    <location>
        <position position="196"/>
    </location>
    <ligand>
        <name>sn-glycerol 3-phosphate</name>
        <dbReference type="ChEBI" id="CHEBI:57597"/>
    </ligand>
</feature>
<feature type="binding site" evidence="1">
    <location>
        <position position="249"/>
    </location>
    <ligand>
        <name>sn-glycerol 3-phosphate</name>
        <dbReference type="ChEBI" id="CHEBI:57597"/>
    </ligand>
</feature>
<feature type="binding site" evidence="1">
    <location>
        <position position="259"/>
    </location>
    <ligand>
        <name>sn-glycerol 3-phosphate</name>
        <dbReference type="ChEBI" id="CHEBI:57597"/>
    </ligand>
</feature>
<feature type="binding site" evidence="1">
    <location>
        <position position="260"/>
    </location>
    <ligand>
        <name>NADPH</name>
        <dbReference type="ChEBI" id="CHEBI:57783"/>
    </ligand>
</feature>
<feature type="binding site" evidence="1">
    <location>
        <position position="260"/>
    </location>
    <ligand>
        <name>sn-glycerol 3-phosphate</name>
        <dbReference type="ChEBI" id="CHEBI:57597"/>
    </ligand>
</feature>
<feature type="binding site" evidence="1">
    <location>
        <position position="261"/>
    </location>
    <ligand>
        <name>sn-glycerol 3-phosphate</name>
        <dbReference type="ChEBI" id="CHEBI:57597"/>
    </ligand>
</feature>
<feature type="binding site" evidence="1">
    <location>
        <position position="284"/>
    </location>
    <ligand>
        <name>NADPH</name>
        <dbReference type="ChEBI" id="CHEBI:57783"/>
    </ligand>
</feature>
<feature type="binding site" evidence="1">
    <location>
        <position position="286"/>
    </location>
    <ligand>
        <name>NADPH</name>
        <dbReference type="ChEBI" id="CHEBI:57783"/>
    </ligand>
</feature>
<comment type="function">
    <text evidence="1">Catalyzes the reduction of the glycolytic intermediate dihydroxyacetone phosphate (DHAP) to sn-glycerol 3-phosphate (G3P), the key precursor for phospholipid synthesis.</text>
</comment>
<comment type="catalytic activity">
    <reaction evidence="1">
        <text>sn-glycerol 3-phosphate + NAD(+) = dihydroxyacetone phosphate + NADH + H(+)</text>
        <dbReference type="Rhea" id="RHEA:11092"/>
        <dbReference type="ChEBI" id="CHEBI:15378"/>
        <dbReference type="ChEBI" id="CHEBI:57540"/>
        <dbReference type="ChEBI" id="CHEBI:57597"/>
        <dbReference type="ChEBI" id="CHEBI:57642"/>
        <dbReference type="ChEBI" id="CHEBI:57945"/>
        <dbReference type="EC" id="1.1.1.94"/>
    </reaction>
    <physiologicalReaction direction="right-to-left" evidence="1">
        <dbReference type="Rhea" id="RHEA:11094"/>
    </physiologicalReaction>
</comment>
<comment type="catalytic activity">
    <reaction evidence="1">
        <text>sn-glycerol 3-phosphate + NADP(+) = dihydroxyacetone phosphate + NADPH + H(+)</text>
        <dbReference type="Rhea" id="RHEA:11096"/>
        <dbReference type="ChEBI" id="CHEBI:15378"/>
        <dbReference type="ChEBI" id="CHEBI:57597"/>
        <dbReference type="ChEBI" id="CHEBI:57642"/>
        <dbReference type="ChEBI" id="CHEBI:57783"/>
        <dbReference type="ChEBI" id="CHEBI:58349"/>
        <dbReference type="EC" id="1.1.1.94"/>
    </reaction>
    <physiologicalReaction direction="right-to-left" evidence="1">
        <dbReference type="Rhea" id="RHEA:11098"/>
    </physiologicalReaction>
</comment>
<comment type="pathway">
    <text evidence="1">Membrane lipid metabolism; glycerophospholipid metabolism.</text>
</comment>
<comment type="subcellular location">
    <subcellularLocation>
        <location evidence="1">Cytoplasm</location>
    </subcellularLocation>
</comment>
<comment type="similarity">
    <text evidence="1">Belongs to the NAD-dependent glycerol-3-phosphate dehydrogenase family.</text>
</comment>
<accession>B3GYJ1</accession>
<dbReference type="EC" id="1.1.1.94" evidence="1"/>
<dbReference type="EMBL" id="CP001091">
    <property type="protein sequence ID" value="ACE62222.1"/>
    <property type="molecule type" value="Genomic_DNA"/>
</dbReference>
<dbReference type="RefSeq" id="WP_005598771.1">
    <property type="nucleotide sequence ID" value="NC_010939.1"/>
</dbReference>
<dbReference type="SMR" id="B3GYJ1"/>
<dbReference type="GeneID" id="48599776"/>
<dbReference type="KEGG" id="apa:APP7_1570"/>
<dbReference type="HOGENOM" id="CLU_033449_0_2_6"/>
<dbReference type="UniPathway" id="UPA00940"/>
<dbReference type="Proteomes" id="UP000001226">
    <property type="component" value="Chromosome"/>
</dbReference>
<dbReference type="GO" id="GO:0005829">
    <property type="term" value="C:cytosol"/>
    <property type="evidence" value="ECO:0007669"/>
    <property type="project" value="TreeGrafter"/>
</dbReference>
<dbReference type="GO" id="GO:0047952">
    <property type="term" value="F:glycerol-3-phosphate dehydrogenase [NAD(P)+] activity"/>
    <property type="evidence" value="ECO:0007669"/>
    <property type="project" value="UniProtKB-UniRule"/>
</dbReference>
<dbReference type="GO" id="GO:0051287">
    <property type="term" value="F:NAD binding"/>
    <property type="evidence" value="ECO:0007669"/>
    <property type="project" value="InterPro"/>
</dbReference>
<dbReference type="GO" id="GO:0005975">
    <property type="term" value="P:carbohydrate metabolic process"/>
    <property type="evidence" value="ECO:0007669"/>
    <property type="project" value="InterPro"/>
</dbReference>
<dbReference type="GO" id="GO:0046167">
    <property type="term" value="P:glycerol-3-phosphate biosynthetic process"/>
    <property type="evidence" value="ECO:0007669"/>
    <property type="project" value="UniProtKB-UniRule"/>
</dbReference>
<dbReference type="GO" id="GO:0046168">
    <property type="term" value="P:glycerol-3-phosphate catabolic process"/>
    <property type="evidence" value="ECO:0007669"/>
    <property type="project" value="InterPro"/>
</dbReference>
<dbReference type="GO" id="GO:0046474">
    <property type="term" value="P:glycerophospholipid biosynthetic process"/>
    <property type="evidence" value="ECO:0007669"/>
    <property type="project" value="TreeGrafter"/>
</dbReference>
<dbReference type="FunFam" id="1.10.1040.10:FF:000001">
    <property type="entry name" value="Glycerol-3-phosphate dehydrogenase [NAD(P)+]"/>
    <property type="match status" value="1"/>
</dbReference>
<dbReference type="FunFam" id="3.40.50.720:FF:000019">
    <property type="entry name" value="Glycerol-3-phosphate dehydrogenase [NAD(P)+]"/>
    <property type="match status" value="1"/>
</dbReference>
<dbReference type="Gene3D" id="1.10.1040.10">
    <property type="entry name" value="N-(1-d-carboxylethyl)-l-norvaline Dehydrogenase, domain 2"/>
    <property type="match status" value="1"/>
</dbReference>
<dbReference type="Gene3D" id="3.40.50.720">
    <property type="entry name" value="NAD(P)-binding Rossmann-like Domain"/>
    <property type="match status" value="1"/>
</dbReference>
<dbReference type="HAMAP" id="MF_00394">
    <property type="entry name" value="NAD_Glyc3P_dehydrog"/>
    <property type="match status" value="1"/>
</dbReference>
<dbReference type="InterPro" id="IPR008927">
    <property type="entry name" value="6-PGluconate_DH-like_C_sf"/>
</dbReference>
<dbReference type="InterPro" id="IPR013328">
    <property type="entry name" value="6PGD_dom2"/>
</dbReference>
<dbReference type="InterPro" id="IPR006168">
    <property type="entry name" value="G3P_DH_NAD-dep"/>
</dbReference>
<dbReference type="InterPro" id="IPR006109">
    <property type="entry name" value="G3P_DH_NAD-dep_C"/>
</dbReference>
<dbReference type="InterPro" id="IPR011128">
    <property type="entry name" value="G3P_DH_NAD-dep_N"/>
</dbReference>
<dbReference type="InterPro" id="IPR036291">
    <property type="entry name" value="NAD(P)-bd_dom_sf"/>
</dbReference>
<dbReference type="NCBIfam" id="NF000939">
    <property type="entry name" value="PRK00094.1-1"/>
    <property type="match status" value="1"/>
</dbReference>
<dbReference type="NCBIfam" id="NF000940">
    <property type="entry name" value="PRK00094.1-2"/>
    <property type="match status" value="1"/>
</dbReference>
<dbReference type="NCBIfam" id="NF000942">
    <property type="entry name" value="PRK00094.1-4"/>
    <property type="match status" value="1"/>
</dbReference>
<dbReference type="PANTHER" id="PTHR11728">
    <property type="entry name" value="GLYCEROL-3-PHOSPHATE DEHYDROGENASE"/>
    <property type="match status" value="1"/>
</dbReference>
<dbReference type="PANTHER" id="PTHR11728:SF1">
    <property type="entry name" value="GLYCEROL-3-PHOSPHATE DEHYDROGENASE [NAD(+)] 2, CHLOROPLASTIC"/>
    <property type="match status" value="1"/>
</dbReference>
<dbReference type="Pfam" id="PF07479">
    <property type="entry name" value="NAD_Gly3P_dh_C"/>
    <property type="match status" value="1"/>
</dbReference>
<dbReference type="Pfam" id="PF01210">
    <property type="entry name" value="NAD_Gly3P_dh_N"/>
    <property type="match status" value="1"/>
</dbReference>
<dbReference type="PIRSF" id="PIRSF000114">
    <property type="entry name" value="Glycerol-3-P_dh"/>
    <property type="match status" value="1"/>
</dbReference>
<dbReference type="PRINTS" id="PR00077">
    <property type="entry name" value="GPDHDRGNASE"/>
</dbReference>
<dbReference type="SUPFAM" id="SSF48179">
    <property type="entry name" value="6-phosphogluconate dehydrogenase C-terminal domain-like"/>
    <property type="match status" value="1"/>
</dbReference>
<dbReference type="SUPFAM" id="SSF51735">
    <property type="entry name" value="NAD(P)-binding Rossmann-fold domains"/>
    <property type="match status" value="1"/>
</dbReference>
<dbReference type="PROSITE" id="PS00957">
    <property type="entry name" value="NAD_G3PDH"/>
    <property type="match status" value="1"/>
</dbReference>
<name>GPDA_ACTP7</name>
<evidence type="ECO:0000255" key="1">
    <source>
        <dbReference type="HAMAP-Rule" id="MF_00394"/>
    </source>
</evidence>
<organism>
    <name type="scientific">Actinobacillus pleuropneumoniae serotype 7 (strain AP76)</name>
    <dbReference type="NCBI Taxonomy" id="537457"/>
    <lineage>
        <taxon>Bacteria</taxon>
        <taxon>Pseudomonadati</taxon>
        <taxon>Pseudomonadota</taxon>
        <taxon>Gammaproteobacteria</taxon>
        <taxon>Pasteurellales</taxon>
        <taxon>Pasteurellaceae</taxon>
        <taxon>Actinobacillus</taxon>
    </lineage>
</organism>